<dbReference type="EMBL" id="AP004561">
    <property type="protein sequence ID" value="BAC92446.1"/>
    <property type="status" value="ALT_INIT"/>
    <property type="molecule type" value="Genomic_DNA"/>
</dbReference>
<dbReference type="EMBL" id="AP005485">
    <property type="protein sequence ID" value="BAD10424.1"/>
    <property type="status" value="ALT_INIT"/>
    <property type="molecule type" value="Genomic_DNA"/>
</dbReference>
<dbReference type="EMBL" id="AP008214">
    <property type="protein sequence ID" value="BAF23437.1"/>
    <property type="molecule type" value="Genomic_DNA"/>
</dbReference>
<dbReference type="EMBL" id="AP014964">
    <property type="protein sequence ID" value="BAT04864.1"/>
    <property type="molecule type" value="Genomic_DNA"/>
</dbReference>
<dbReference type="EMBL" id="AK108030">
    <property type="protein sequence ID" value="BAG98257.1"/>
    <property type="molecule type" value="mRNA"/>
</dbReference>
<dbReference type="SMR" id="Q0J6H8"/>
<dbReference type="FunCoup" id="Q0J6H8">
    <property type="interactions" value="852"/>
</dbReference>
<dbReference type="STRING" id="39947.Q0J6H8"/>
<dbReference type="PaxDb" id="39947-Q0J6H8"/>
<dbReference type="EnsemblPlants" id="Os08t0319900-01">
    <property type="protein sequence ID" value="Os08t0319900-01"/>
    <property type="gene ID" value="Os08g0319900"/>
</dbReference>
<dbReference type="GeneID" id="4345252"/>
<dbReference type="Gramene" id="Os08t0319900-01">
    <property type="protein sequence ID" value="Os08t0319900-01"/>
    <property type="gene ID" value="Os08g0319900"/>
</dbReference>
<dbReference type="KEGG" id="dosa:Os08g0319900"/>
<dbReference type="KEGG" id="osa:4345252"/>
<dbReference type="eggNOG" id="ENOG502QRBQ">
    <property type="taxonomic scope" value="Eukaryota"/>
</dbReference>
<dbReference type="HOGENOM" id="CLU_030671_4_1_1"/>
<dbReference type="InParanoid" id="Q0J6H8"/>
<dbReference type="OMA" id="FNFEFIY"/>
<dbReference type="OrthoDB" id="7108654at2759"/>
<dbReference type="Proteomes" id="UP000000763">
    <property type="component" value="Chromosome 8"/>
</dbReference>
<dbReference type="Proteomes" id="UP000059680">
    <property type="component" value="Chromosome 8"/>
</dbReference>
<dbReference type="GO" id="GO:0005576">
    <property type="term" value="C:extracellular region"/>
    <property type="evidence" value="ECO:0007669"/>
    <property type="project" value="UniProtKB-KW"/>
</dbReference>
<dbReference type="GO" id="GO:0004061">
    <property type="term" value="F:arylformamidase activity"/>
    <property type="evidence" value="ECO:0000318"/>
    <property type="project" value="GO_Central"/>
</dbReference>
<dbReference type="GO" id="GO:0019441">
    <property type="term" value="P:L-tryptophan catabolic process to kynurenine"/>
    <property type="evidence" value="ECO:0000318"/>
    <property type="project" value="GO_Central"/>
</dbReference>
<dbReference type="FunFam" id="3.50.30.50:FF:000002">
    <property type="entry name" value="Kynurenine formamidase"/>
    <property type="match status" value="1"/>
</dbReference>
<dbReference type="Gene3D" id="3.50.30.50">
    <property type="entry name" value="Putative cyclase"/>
    <property type="match status" value="1"/>
</dbReference>
<dbReference type="InterPro" id="IPR007325">
    <property type="entry name" value="KFase/CYL"/>
</dbReference>
<dbReference type="InterPro" id="IPR037175">
    <property type="entry name" value="KFase_sf"/>
</dbReference>
<dbReference type="PANTHER" id="PTHR31118">
    <property type="entry name" value="CYCLASE-LIKE PROTEIN 2"/>
    <property type="match status" value="1"/>
</dbReference>
<dbReference type="PANTHER" id="PTHR31118:SF12">
    <property type="entry name" value="CYCLASE-LIKE PROTEIN 2"/>
    <property type="match status" value="1"/>
</dbReference>
<dbReference type="Pfam" id="PF04199">
    <property type="entry name" value="Cyclase"/>
    <property type="match status" value="1"/>
</dbReference>
<dbReference type="SUPFAM" id="SSF102198">
    <property type="entry name" value="Putative cyclase"/>
    <property type="match status" value="1"/>
</dbReference>
<organism>
    <name type="scientific">Oryza sativa subsp. japonica</name>
    <name type="common">Rice</name>
    <dbReference type="NCBI Taxonomy" id="39947"/>
    <lineage>
        <taxon>Eukaryota</taxon>
        <taxon>Viridiplantae</taxon>
        <taxon>Streptophyta</taxon>
        <taxon>Embryophyta</taxon>
        <taxon>Tracheophyta</taxon>
        <taxon>Spermatophyta</taxon>
        <taxon>Magnoliopsida</taxon>
        <taxon>Liliopsida</taxon>
        <taxon>Poales</taxon>
        <taxon>Poaceae</taxon>
        <taxon>BOP clade</taxon>
        <taxon>Oryzoideae</taxon>
        <taxon>Oryzeae</taxon>
        <taxon>Oryzinae</taxon>
        <taxon>Oryza</taxon>
        <taxon>Oryza sativa</taxon>
    </lineage>
</organism>
<comment type="function">
    <text evidence="1">May be involved in response to stresses.</text>
</comment>
<comment type="subcellular location">
    <subcellularLocation>
        <location evidence="1">Secreted</location>
        <location evidence="1">Extracellular space</location>
        <location evidence="1">Extracellular matrix</location>
    </subcellularLocation>
</comment>
<comment type="tissue specificity">
    <text evidence="3">Highly expressed in leaf sheaths. leaf collars and flag leaves. Expressed in roots, stems, glumes, young panicles and pistils.</text>
</comment>
<comment type="induction">
    <text>Induced by cold, salt and drought stresses. Induced by abscisic acid, auxine, brassinosteroid, ethylene, gibberellin, jasmonate, kinetin, reactive oxygen species and salicylate.</text>
</comment>
<comment type="similarity">
    <text evidence="5">Belongs to the Cyclase 1 superfamily.</text>
</comment>
<comment type="sequence caution" evidence="5">
    <conflict type="erroneous initiation">
        <sequence resource="EMBL-CDS" id="BAC92446"/>
    </conflict>
    <text>Truncated N-terminus.</text>
</comment>
<comment type="sequence caution" evidence="5">
    <conflict type="erroneous initiation">
        <sequence resource="EMBL-CDS" id="BAD10424"/>
    </conflict>
    <text>Truncated N-terminus.</text>
</comment>
<proteinExistence type="evidence at transcript level"/>
<gene>
    <name evidence="4" type="primary">CYL3</name>
    <name evidence="8" type="ordered locus">Os08g0319900</name>
    <name evidence="5" type="ordered locus">LOC_Os08g23100</name>
    <name evidence="7" type="ORF">OJ1136_D12.114</name>
    <name evidence="6" type="ORF">P0465H09.131</name>
</gene>
<keyword id="KW-0272">Extracellular matrix</keyword>
<keyword id="KW-1185">Reference proteome</keyword>
<keyword id="KW-0964">Secreted</keyword>
<keyword id="KW-0732">Signal</keyword>
<keyword id="KW-0346">Stress response</keyword>
<sequence length="270" mass="30089">MMAHLAPLFLLLLLLLLPLHAAATPSAHPAYPNEPPSCAAAVPVPERREAHGGGRILDITHYYREDMPSWESDGGVGQFLWLPASMRNGSRANNSEMRLPTHTGTHVDAPGHVFQHYFDAGFDVDSLDLEVLNGLALLVDVPRDDNITAKMMESLHIPKGIQRVLFRTLNTDRQLMWKKEFDTSYVGFMEDGAQWLVDNTDIKLVGIDYLSVAAFDDLIPSHLVLLKNRDIILVEGLKLENIMPGIYSLHCLPLRLRGAEGSPIRCILIK</sequence>
<evidence type="ECO:0000250" key="1">
    <source>
        <dbReference type="UniProtKB" id="Q6YX89"/>
    </source>
</evidence>
<evidence type="ECO:0000255" key="2"/>
<evidence type="ECO:0000269" key="3">
    <source>
    </source>
</evidence>
<evidence type="ECO:0000303" key="4">
    <source>
    </source>
</evidence>
<evidence type="ECO:0000305" key="5"/>
<evidence type="ECO:0000312" key="6">
    <source>
        <dbReference type="EMBL" id="BAC92446.1"/>
    </source>
</evidence>
<evidence type="ECO:0000312" key="7">
    <source>
        <dbReference type="EMBL" id="BAD10424.1"/>
    </source>
</evidence>
<evidence type="ECO:0000312" key="8">
    <source>
        <dbReference type="EMBL" id="BAT04864.1"/>
    </source>
</evidence>
<reference key="1">
    <citation type="journal article" date="2005" name="Nature">
        <title>The map-based sequence of the rice genome.</title>
        <authorList>
            <consortium name="International rice genome sequencing project (IRGSP)"/>
        </authorList>
    </citation>
    <scope>NUCLEOTIDE SEQUENCE [LARGE SCALE GENOMIC DNA]</scope>
    <source>
        <strain>cv. Nipponbare</strain>
    </source>
</reference>
<reference key="2">
    <citation type="journal article" date="2008" name="Nucleic Acids Res.">
        <title>The rice annotation project database (RAP-DB): 2008 update.</title>
        <authorList>
            <consortium name="The rice annotation project (RAP)"/>
        </authorList>
    </citation>
    <scope>GENOME REANNOTATION</scope>
    <source>
        <strain>cv. Nipponbare</strain>
    </source>
</reference>
<reference key="3">
    <citation type="journal article" date="2013" name="Rice">
        <title>Improvement of the Oryza sativa Nipponbare reference genome using next generation sequence and optical map data.</title>
        <authorList>
            <person name="Kawahara Y."/>
            <person name="de la Bastide M."/>
            <person name="Hamilton J.P."/>
            <person name="Kanamori H."/>
            <person name="McCombie W.R."/>
            <person name="Ouyang S."/>
            <person name="Schwartz D.C."/>
            <person name="Tanaka T."/>
            <person name="Wu J."/>
            <person name="Zhou S."/>
            <person name="Childs K.L."/>
            <person name="Davidson R.M."/>
            <person name="Lin H."/>
            <person name="Quesada-Ocampo L."/>
            <person name="Vaillancourt B."/>
            <person name="Sakai H."/>
            <person name="Lee S.S."/>
            <person name="Kim J."/>
            <person name="Numa H."/>
            <person name="Itoh T."/>
            <person name="Buell C.R."/>
            <person name="Matsumoto T."/>
        </authorList>
    </citation>
    <scope>GENOME REANNOTATION</scope>
    <source>
        <strain>cv. Nipponbare</strain>
    </source>
</reference>
<reference key="4">
    <citation type="journal article" date="2003" name="Science">
        <title>Collection, mapping, and annotation of over 28,000 cDNA clones from japonica rice.</title>
        <authorList>
            <consortium name="The rice full-length cDNA consortium"/>
        </authorList>
    </citation>
    <scope>NUCLEOTIDE SEQUENCE [LARGE SCALE MRNA]</scope>
    <source>
        <strain>cv. Nipponbare</strain>
    </source>
</reference>
<reference key="5">
    <citation type="journal article" date="2015" name="J. Plant Physiol.">
        <title>Characterization of a novel cyclase-like gene family involved in controlling stress tolerance in rice.</title>
        <authorList>
            <person name="Qin Y."/>
            <person name="Shen X."/>
            <person name="Wang N."/>
            <person name="Ding X."/>
        </authorList>
    </citation>
    <scope>TISSUE SPECIFICITY</scope>
    <scope>INDUCTION</scope>
    <scope>GENE FAMILY</scope>
    <scope>NOMENCLATURE</scope>
</reference>
<accession>Q0J6H8</accession>
<accession>Q6Z0P1</accession>
<protein>
    <recommendedName>
        <fullName evidence="4">Cyclase-like protein 3</fullName>
        <shortName evidence="4">OsCYL3</shortName>
    </recommendedName>
</protein>
<name>CYL3_ORYSJ</name>
<feature type="signal peptide" evidence="2">
    <location>
        <begin position="1"/>
        <end position="23"/>
    </location>
</feature>
<feature type="chain" id="PRO_5011945524" description="Cyclase-like protein 3">
    <location>
        <begin position="24"/>
        <end position="270"/>
    </location>
</feature>